<reference key="1">
    <citation type="submission" date="2009-02" db="EMBL/GenBank/DDBJ databases">
        <title>Genome sequence of Bacillus cereus 03BB102.</title>
        <authorList>
            <person name="Dodson R.J."/>
            <person name="Jackson P."/>
            <person name="Munk A.C."/>
            <person name="Brettin T."/>
            <person name="Bruce D."/>
            <person name="Detter C."/>
            <person name="Tapia R."/>
            <person name="Han C."/>
            <person name="Sutton G."/>
            <person name="Sims D."/>
        </authorList>
    </citation>
    <scope>NUCLEOTIDE SEQUENCE [LARGE SCALE GENOMIC DNA]</scope>
    <source>
        <strain>03BB102</strain>
    </source>
</reference>
<organism>
    <name type="scientific">Bacillus cereus (strain 03BB102)</name>
    <dbReference type="NCBI Taxonomy" id="572264"/>
    <lineage>
        <taxon>Bacteria</taxon>
        <taxon>Bacillati</taxon>
        <taxon>Bacillota</taxon>
        <taxon>Bacilli</taxon>
        <taxon>Bacillales</taxon>
        <taxon>Bacillaceae</taxon>
        <taxon>Bacillus</taxon>
        <taxon>Bacillus cereus group</taxon>
    </lineage>
</organism>
<protein>
    <recommendedName>
        <fullName evidence="1">DNA mismatch repair protein MutS</fullName>
    </recommendedName>
</protein>
<feature type="chain" id="PRO_1000192196" description="DNA mismatch repair protein MutS">
    <location>
        <begin position="1"/>
        <end position="890"/>
    </location>
</feature>
<feature type="region of interest" description="Disordered" evidence="2">
    <location>
        <begin position="832"/>
        <end position="851"/>
    </location>
</feature>
<feature type="binding site" evidence="1">
    <location>
        <begin position="607"/>
        <end position="614"/>
    </location>
    <ligand>
        <name>ATP</name>
        <dbReference type="ChEBI" id="CHEBI:30616"/>
    </ligand>
</feature>
<proteinExistence type="inferred from homology"/>
<dbReference type="EMBL" id="CP001407">
    <property type="protein sequence ID" value="ACO28204.1"/>
    <property type="molecule type" value="Genomic_DNA"/>
</dbReference>
<dbReference type="RefSeq" id="WP_000196011.1">
    <property type="nucleotide sequence ID" value="NZ_CP009318.1"/>
</dbReference>
<dbReference type="SMR" id="C1ENZ3"/>
<dbReference type="KEGG" id="bcx:BCA_3866"/>
<dbReference type="PATRIC" id="fig|572264.18.peg.3824"/>
<dbReference type="Proteomes" id="UP000002210">
    <property type="component" value="Chromosome"/>
</dbReference>
<dbReference type="GO" id="GO:0005829">
    <property type="term" value="C:cytosol"/>
    <property type="evidence" value="ECO:0007669"/>
    <property type="project" value="TreeGrafter"/>
</dbReference>
<dbReference type="GO" id="GO:0005524">
    <property type="term" value="F:ATP binding"/>
    <property type="evidence" value="ECO:0007669"/>
    <property type="project" value="UniProtKB-UniRule"/>
</dbReference>
<dbReference type="GO" id="GO:0140664">
    <property type="term" value="F:ATP-dependent DNA damage sensor activity"/>
    <property type="evidence" value="ECO:0007669"/>
    <property type="project" value="InterPro"/>
</dbReference>
<dbReference type="GO" id="GO:0003684">
    <property type="term" value="F:damaged DNA binding"/>
    <property type="evidence" value="ECO:0007669"/>
    <property type="project" value="UniProtKB-UniRule"/>
</dbReference>
<dbReference type="GO" id="GO:0030983">
    <property type="term" value="F:mismatched DNA binding"/>
    <property type="evidence" value="ECO:0007669"/>
    <property type="project" value="InterPro"/>
</dbReference>
<dbReference type="GO" id="GO:0006298">
    <property type="term" value="P:mismatch repair"/>
    <property type="evidence" value="ECO:0007669"/>
    <property type="project" value="UniProtKB-UniRule"/>
</dbReference>
<dbReference type="CDD" id="cd03284">
    <property type="entry name" value="ABC_MutS1"/>
    <property type="match status" value="1"/>
</dbReference>
<dbReference type="FunFam" id="1.10.1420.10:FF:000007">
    <property type="entry name" value="DNA mismatch repair protein MutS"/>
    <property type="match status" value="1"/>
</dbReference>
<dbReference type="FunFam" id="3.30.420.110:FF:000007">
    <property type="entry name" value="DNA mismatch repair protein MutS"/>
    <property type="match status" value="1"/>
</dbReference>
<dbReference type="FunFam" id="3.40.1170.10:FF:000001">
    <property type="entry name" value="DNA mismatch repair protein MutS"/>
    <property type="match status" value="1"/>
</dbReference>
<dbReference type="FunFam" id="3.40.50.300:FF:000896">
    <property type="entry name" value="DNA mismatch repair protein MutS"/>
    <property type="match status" value="1"/>
</dbReference>
<dbReference type="Gene3D" id="1.10.1420.10">
    <property type="match status" value="2"/>
</dbReference>
<dbReference type="Gene3D" id="3.40.1170.10">
    <property type="entry name" value="DNA repair protein MutS, domain I"/>
    <property type="match status" value="1"/>
</dbReference>
<dbReference type="Gene3D" id="3.30.420.110">
    <property type="entry name" value="MutS, connector domain"/>
    <property type="match status" value="1"/>
</dbReference>
<dbReference type="Gene3D" id="3.40.50.300">
    <property type="entry name" value="P-loop containing nucleotide triphosphate hydrolases"/>
    <property type="match status" value="1"/>
</dbReference>
<dbReference type="HAMAP" id="MF_00096">
    <property type="entry name" value="MutS"/>
    <property type="match status" value="1"/>
</dbReference>
<dbReference type="InterPro" id="IPR005748">
    <property type="entry name" value="DNA_mismatch_repair_MutS"/>
</dbReference>
<dbReference type="InterPro" id="IPR007695">
    <property type="entry name" value="DNA_mismatch_repair_MutS-lik_N"/>
</dbReference>
<dbReference type="InterPro" id="IPR017261">
    <property type="entry name" value="DNA_mismatch_repair_MutS/MSH"/>
</dbReference>
<dbReference type="InterPro" id="IPR000432">
    <property type="entry name" value="DNA_mismatch_repair_MutS_C"/>
</dbReference>
<dbReference type="InterPro" id="IPR007861">
    <property type="entry name" value="DNA_mismatch_repair_MutS_clamp"/>
</dbReference>
<dbReference type="InterPro" id="IPR007696">
    <property type="entry name" value="DNA_mismatch_repair_MutS_core"/>
</dbReference>
<dbReference type="InterPro" id="IPR016151">
    <property type="entry name" value="DNA_mismatch_repair_MutS_N"/>
</dbReference>
<dbReference type="InterPro" id="IPR036187">
    <property type="entry name" value="DNA_mismatch_repair_MutS_sf"/>
</dbReference>
<dbReference type="InterPro" id="IPR007860">
    <property type="entry name" value="DNA_mmatch_repair_MutS_con_dom"/>
</dbReference>
<dbReference type="InterPro" id="IPR045076">
    <property type="entry name" value="MutS"/>
</dbReference>
<dbReference type="InterPro" id="IPR036678">
    <property type="entry name" value="MutS_con_dom_sf"/>
</dbReference>
<dbReference type="InterPro" id="IPR027417">
    <property type="entry name" value="P-loop_NTPase"/>
</dbReference>
<dbReference type="NCBIfam" id="TIGR01070">
    <property type="entry name" value="mutS1"/>
    <property type="match status" value="1"/>
</dbReference>
<dbReference type="NCBIfam" id="NF003810">
    <property type="entry name" value="PRK05399.1"/>
    <property type="match status" value="1"/>
</dbReference>
<dbReference type="PANTHER" id="PTHR11361:SF34">
    <property type="entry name" value="DNA MISMATCH REPAIR PROTEIN MSH1, MITOCHONDRIAL"/>
    <property type="match status" value="1"/>
</dbReference>
<dbReference type="PANTHER" id="PTHR11361">
    <property type="entry name" value="DNA MISMATCH REPAIR PROTEIN MUTS FAMILY MEMBER"/>
    <property type="match status" value="1"/>
</dbReference>
<dbReference type="Pfam" id="PF01624">
    <property type="entry name" value="MutS_I"/>
    <property type="match status" value="1"/>
</dbReference>
<dbReference type="Pfam" id="PF05188">
    <property type="entry name" value="MutS_II"/>
    <property type="match status" value="1"/>
</dbReference>
<dbReference type="Pfam" id="PF05192">
    <property type="entry name" value="MutS_III"/>
    <property type="match status" value="1"/>
</dbReference>
<dbReference type="Pfam" id="PF05190">
    <property type="entry name" value="MutS_IV"/>
    <property type="match status" value="1"/>
</dbReference>
<dbReference type="Pfam" id="PF00488">
    <property type="entry name" value="MutS_V"/>
    <property type="match status" value="1"/>
</dbReference>
<dbReference type="PIRSF" id="PIRSF037677">
    <property type="entry name" value="DNA_mis_repair_Msh6"/>
    <property type="match status" value="1"/>
</dbReference>
<dbReference type="SMART" id="SM00534">
    <property type="entry name" value="MUTSac"/>
    <property type="match status" value="1"/>
</dbReference>
<dbReference type="SMART" id="SM00533">
    <property type="entry name" value="MUTSd"/>
    <property type="match status" value="1"/>
</dbReference>
<dbReference type="SUPFAM" id="SSF55271">
    <property type="entry name" value="DNA repair protein MutS, domain I"/>
    <property type="match status" value="1"/>
</dbReference>
<dbReference type="SUPFAM" id="SSF53150">
    <property type="entry name" value="DNA repair protein MutS, domain II"/>
    <property type="match status" value="1"/>
</dbReference>
<dbReference type="SUPFAM" id="SSF48334">
    <property type="entry name" value="DNA repair protein MutS, domain III"/>
    <property type="match status" value="1"/>
</dbReference>
<dbReference type="SUPFAM" id="SSF52540">
    <property type="entry name" value="P-loop containing nucleoside triphosphate hydrolases"/>
    <property type="match status" value="1"/>
</dbReference>
<dbReference type="PROSITE" id="PS00486">
    <property type="entry name" value="DNA_MISMATCH_REPAIR_2"/>
    <property type="match status" value="1"/>
</dbReference>
<name>MUTS_BACC3</name>
<accession>C1ENZ3</accession>
<keyword id="KW-0067">ATP-binding</keyword>
<keyword id="KW-0227">DNA damage</keyword>
<keyword id="KW-0234">DNA repair</keyword>
<keyword id="KW-0238">DNA-binding</keyword>
<keyword id="KW-0547">Nucleotide-binding</keyword>
<evidence type="ECO:0000255" key="1">
    <source>
        <dbReference type="HAMAP-Rule" id="MF_00096"/>
    </source>
</evidence>
<evidence type="ECO:0000256" key="2">
    <source>
        <dbReference type="SAM" id="MobiDB-lite"/>
    </source>
</evidence>
<sequence length="890" mass="100871">MTQYTPMIQQYLKVKADYQDAFLFFRLGDFYEMFFEDAVKAAHELEITLTSRDGGSSERIPMCGVPYHAAKNYIEQLVEKGYKVAVCEQVEDPKTAKGVVRREVVQLITPGTMMEGRTIDEKENNFLAALTHFEDGSYALACNDLTTGQNTVTLLTGSVEDILLEVYATGSKEIVVDSSFSKDELNKLTETLKMTISYEDATAIPEGLEHLVKNVSQAKLIKAVGRLFNYVIRTQKRSLDHLQPVEIYYTNQFMKIDVHSKRNLELTETLRTKEKTGSLLWLLDKTKTAMGGRMLKQWMERPLIQKERIEERLEMVETFVNDYFLREDLKEKLKEVYDLERLAGKVAFGNVNARDLLQLRRSLLQVPAILEAISLLDNAYAARLIQGADPCESLTELLGRSIQENPPLSIKDGDIIKDGYNDKLDQYRYVSKNGKTWIAELEKRERDITGIKSLKIGYNRIFGYYIEVTKANLGALPEGRYERKQTLANAERFITDELKEKETLILEAEEKIVQLEYDLFTALREEVKVFIPKLQHLAKVISELDVLQSFATVSEEEQFVKPVLTTKREIFIKDGRHPVVEKVLNGKLYVPNDCIMPENMDVFLITGPNMSGKSTYMRQLALVTVMSQIGCFVPATEAVLPVFDQIFTRIGAADDLISGQSTFMVEMLEAKNAIANASERSLILFDEIGRGTSTYDGMALAQAIIEHIHDQIGAKTLFSTHYHELTVLEDSLDQLKNVHVSAIEENGKVVFLHKIQDGAADKSYGIHVAQLAELPDSLIARAKEVLAQLEGQEEIVIPKRVEVKEQEVIPEPVVVKEEPVAIEETKVDNEEESQLSFFGTEQSSKKQDKPVLDAKETAVLTQIKKIDLLDMTPLEAMNELYRLQKKLKKG</sequence>
<comment type="function">
    <text evidence="1">This protein is involved in the repair of mismatches in DNA. It is possible that it carries out the mismatch recognition step. This protein has a weak ATPase activity.</text>
</comment>
<comment type="similarity">
    <text evidence="1">Belongs to the DNA mismatch repair MutS family.</text>
</comment>
<gene>
    <name evidence="1" type="primary">mutS</name>
    <name type="ordered locus">BCA_3866</name>
</gene>